<keyword id="KW-0963">Cytoplasm</keyword>
<protein>
    <recommendedName>
        <fullName evidence="1">Protein FdhE</fullName>
    </recommendedName>
</protein>
<accession>B5BJF4</accession>
<organism>
    <name type="scientific">Salmonella paratyphi A (strain AKU_12601)</name>
    <dbReference type="NCBI Taxonomy" id="554290"/>
    <lineage>
        <taxon>Bacteria</taxon>
        <taxon>Pseudomonadati</taxon>
        <taxon>Pseudomonadota</taxon>
        <taxon>Gammaproteobacteria</taxon>
        <taxon>Enterobacterales</taxon>
        <taxon>Enterobacteriaceae</taxon>
        <taxon>Salmonella</taxon>
    </lineage>
</organism>
<reference key="1">
    <citation type="journal article" date="2009" name="BMC Genomics">
        <title>Pseudogene accumulation in the evolutionary histories of Salmonella enterica serovars Paratyphi A and Typhi.</title>
        <authorList>
            <person name="Holt K.E."/>
            <person name="Thomson N.R."/>
            <person name="Wain J."/>
            <person name="Langridge G.C."/>
            <person name="Hasan R."/>
            <person name="Bhutta Z.A."/>
            <person name="Quail M.A."/>
            <person name="Norbertczak H."/>
            <person name="Walker D."/>
            <person name="Simmonds M."/>
            <person name="White B."/>
            <person name="Bason N."/>
            <person name="Mungall K."/>
            <person name="Dougan G."/>
            <person name="Parkhill J."/>
        </authorList>
    </citation>
    <scope>NUCLEOTIDE SEQUENCE [LARGE SCALE GENOMIC DNA]</scope>
    <source>
        <strain>AKU_12601</strain>
    </source>
</reference>
<gene>
    <name evidence="1" type="primary">fdhE</name>
    <name type="ordered locus">SSPA3605</name>
</gene>
<evidence type="ECO:0000255" key="1">
    <source>
        <dbReference type="HAMAP-Rule" id="MF_00611"/>
    </source>
</evidence>
<feature type="chain" id="PRO_1000130372" description="Protein FdhE">
    <location>
        <begin position="1"/>
        <end position="309"/>
    </location>
</feature>
<proteinExistence type="inferred from homology"/>
<dbReference type="EMBL" id="FM200053">
    <property type="protein sequence ID" value="CAR61886.1"/>
    <property type="molecule type" value="Genomic_DNA"/>
</dbReference>
<dbReference type="RefSeq" id="WP_000027726.1">
    <property type="nucleotide sequence ID" value="NC_011147.1"/>
</dbReference>
<dbReference type="SMR" id="B5BJF4"/>
<dbReference type="KEGG" id="sek:SSPA3605"/>
<dbReference type="HOGENOM" id="CLU_055275_0_0_6"/>
<dbReference type="Proteomes" id="UP000001869">
    <property type="component" value="Chromosome"/>
</dbReference>
<dbReference type="GO" id="GO:0005829">
    <property type="term" value="C:cytosol"/>
    <property type="evidence" value="ECO:0007669"/>
    <property type="project" value="TreeGrafter"/>
</dbReference>
<dbReference type="GO" id="GO:0008199">
    <property type="term" value="F:ferric iron binding"/>
    <property type="evidence" value="ECO:0007669"/>
    <property type="project" value="TreeGrafter"/>
</dbReference>
<dbReference type="GO" id="GO:0051604">
    <property type="term" value="P:protein maturation"/>
    <property type="evidence" value="ECO:0007669"/>
    <property type="project" value="TreeGrafter"/>
</dbReference>
<dbReference type="CDD" id="cd16341">
    <property type="entry name" value="FdhE"/>
    <property type="match status" value="1"/>
</dbReference>
<dbReference type="FunFam" id="3.90.1670.10:FF:000001">
    <property type="entry name" value="Protein FdhE"/>
    <property type="match status" value="1"/>
</dbReference>
<dbReference type="Gene3D" id="3.90.1670.10">
    <property type="entry name" value="FdhE-like domain"/>
    <property type="match status" value="1"/>
</dbReference>
<dbReference type="HAMAP" id="MF_00611">
    <property type="entry name" value="FdeH"/>
    <property type="match status" value="1"/>
</dbReference>
<dbReference type="InterPro" id="IPR024064">
    <property type="entry name" value="FdhE-like_sf"/>
</dbReference>
<dbReference type="InterPro" id="IPR056796">
    <property type="entry name" value="FdhE_C"/>
</dbReference>
<dbReference type="InterPro" id="IPR056797">
    <property type="entry name" value="FdhE_central"/>
</dbReference>
<dbReference type="InterPro" id="IPR056774">
    <property type="entry name" value="FdhE_N"/>
</dbReference>
<dbReference type="InterPro" id="IPR006452">
    <property type="entry name" value="Formate_DH_accessory"/>
</dbReference>
<dbReference type="NCBIfam" id="TIGR01562">
    <property type="entry name" value="FdhE"/>
    <property type="match status" value="1"/>
</dbReference>
<dbReference type="NCBIfam" id="NF002925">
    <property type="entry name" value="PRK03564.1"/>
    <property type="match status" value="1"/>
</dbReference>
<dbReference type="PANTHER" id="PTHR37689">
    <property type="entry name" value="PROTEIN FDHE"/>
    <property type="match status" value="1"/>
</dbReference>
<dbReference type="PANTHER" id="PTHR37689:SF1">
    <property type="entry name" value="PROTEIN FDHE"/>
    <property type="match status" value="1"/>
</dbReference>
<dbReference type="Pfam" id="PF24860">
    <property type="entry name" value="FdhE_C"/>
    <property type="match status" value="1"/>
</dbReference>
<dbReference type="Pfam" id="PF24859">
    <property type="entry name" value="FdhE_central"/>
    <property type="match status" value="1"/>
</dbReference>
<dbReference type="Pfam" id="PF04216">
    <property type="entry name" value="FdhE_N"/>
    <property type="match status" value="1"/>
</dbReference>
<dbReference type="PIRSF" id="PIRSF018296">
    <property type="entry name" value="Format_dh_formtn"/>
    <property type="match status" value="1"/>
</dbReference>
<dbReference type="SUPFAM" id="SSF144020">
    <property type="entry name" value="FdhE-like"/>
    <property type="match status" value="1"/>
</dbReference>
<sequence>MSIRIIPQDELGSSEKRTADMIPPLLFPRLKNVYNRRAERLRELAENNPLGDYLRFAALIAHAQEVVLYDHPLEMDLTARIKEANDQGKPPLDIHVLPRDKHWQKLLHSLIAELKPEMNGPALAVIENLEKASEQELEQMASALFASDFASVSSDKAPFIWAALSLYWAQMASLIPGKARAEYGEARQYCPVCGSMPVSSMVQIDTTQGLRYLHCNLCETEWHVVRVKCSNCEQSRDLHYWSLENEQAAVKAESCGDCGTYLKILYQEKDPKVEAVADDLASLVLDARMEQEGFARSSINPFLFPGEGE</sequence>
<comment type="function">
    <text evidence="1">Necessary for formate dehydrogenase activity.</text>
</comment>
<comment type="subcellular location">
    <subcellularLocation>
        <location evidence="1">Cytoplasm</location>
    </subcellularLocation>
</comment>
<comment type="similarity">
    <text evidence="1">Belongs to the FdhE family.</text>
</comment>
<name>FDHE_SALPK</name>